<comment type="function">
    <text evidence="1">Binds to the 23S rRNA.</text>
</comment>
<comment type="similarity">
    <text evidence="1">Belongs to the bacterial ribosomal protein bL9 family.</text>
</comment>
<feature type="chain" id="PRO_1000126888" description="Large ribosomal subunit protein bL9">
    <location>
        <begin position="1"/>
        <end position="151"/>
    </location>
</feature>
<evidence type="ECO:0000255" key="1">
    <source>
        <dbReference type="HAMAP-Rule" id="MF_00503"/>
    </source>
</evidence>
<evidence type="ECO:0000305" key="2"/>
<reference key="1">
    <citation type="submission" date="2008-06" db="EMBL/GenBank/DDBJ databases">
        <title>Complete sequence of Chloroherpeton thalassium ATCC 35110.</title>
        <authorList>
            <consortium name="US DOE Joint Genome Institute"/>
            <person name="Lucas S."/>
            <person name="Copeland A."/>
            <person name="Lapidus A."/>
            <person name="Glavina del Rio T."/>
            <person name="Dalin E."/>
            <person name="Tice H."/>
            <person name="Bruce D."/>
            <person name="Goodwin L."/>
            <person name="Pitluck S."/>
            <person name="Schmutz J."/>
            <person name="Larimer F."/>
            <person name="Land M."/>
            <person name="Hauser L."/>
            <person name="Kyrpides N."/>
            <person name="Mikhailova N."/>
            <person name="Liu Z."/>
            <person name="Li T."/>
            <person name="Zhao F."/>
            <person name="Overmann J."/>
            <person name="Bryant D.A."/>
            <person name="Richardson P."/>
        </authorList>
    </citation>
    <scope>NUCLEOTIDE SEQUENCE [LARGE SCALE GENOMIC DNA]</scope>
    <source>
        <strain>ATCC 35110 / GB-78</strain>
    </source>
</reference>
<protein>
    <recommendedName>
        <fullName evidence="1">Large ribosomal subunit protein bL9</fullName>
    </recommendedName>
    <alternativeName>
        <fullName evidence="2">50S ribosomal protein L9</fullName>
    </alternativeName>
</protein>
<sequence>MKIILRKEVSSLGLQGEVVTVKDGYARNFLIPNGLAIRATEGAIKAIETEKKQRAFKIEKERKAARELADSIERISLSVCVKAGESGKLFGTVTPQMIADGLKTKGFDVDRKQITIEEPIKALGKYEVSIKLYTDVVATLKLEVEGEAVEG</sequence>
<dbReference type="EMBL" id="CP001100">
    <property type="protein sequence ID" value="ACF13121.1"/>
    <property type="molecule type" value="Genomic_DNA"/>
</dbReference>
<dbReference type="RefSeq" id="WP_012499205.1">
    <property type="nucleotide sequence ID" value="NC_011026.1"/>
</dbReference>
<dbReference type="SMR" id="B3QVR4"/>
<dbReference type="STRING" id="517418.Ctha_0651"/>
<dbReference type="KEGG" id="cts:Ctha_0651"/>
<dbReference type="eggNOG" id="COG0359">
    <property type="taxonomic scope" value="Bacteria"/>
</dbReference>
<dbReference type="HOGENOM" id="CLU_078938_3_0_10"/>
<dbReference type="OrthoDB" id="9788336at2"/>
<dbReference type="Proteomes" id="UP000001208">
    <property type="component" value="Chromosome"/>
</dbReference>
<dbReference type="GO" id="GO:1990904">
    <property type="term" value="C:ribonucleoprotein complex"/>
    <property type="evidence" value="ECO:0007669"/>
    <property type="project" value="UniProtKB-KW"/>
</dbReference>
<dbReference type="GO" id="GO:0005840">
    <property type="term" value="C:ribosome"/>
    <property type="evidence" value="ECO:0007669"/>
    <property type="project" value="UniProtKB-KW"/>
</dbReference>
<dbReference type="GO" id="GO:0019843">
    <property type="term" value="F:rRNA binding"/>
    <property type="evidence" value="ECO:0007669"/>
    <property type="project" value="UniProtKB-UniRule"/>
</dbReference>
<dbReference type="GO" id="GO:0003735">
    <property type="term" value="F:structural constituent of ribosome"/>
    <property type="evidence" value="ECO:0007669"/>
    <property type="project" value="InterPro"/>
</dbReference>
<dbReference type="GO" id="GO:0006412">
    <property type="term" value="P:translation"/>
    <property type="evidence" value="ECO:0007669"/>
    <property type="project" value="UniProtKB-UniRule"/>
</dbReference>
<dbReference type="FunFam" id="3.40.5.10:FF:000003">
    <property type="entry name" value="50S ribosomal protein L9"/>
    <property type="match status" value="1"/>
</dbReference>
<dbReference type="Gene3D" id="3.10.430.100">
    <property type="entry name" value="Ribosomal protein L9, C-terminal domain"/>
    <property type="match status" value="1"/>
</dbReference>
<dbReference type="Gene3D" id="3.40.5.10">
    <property type="entry name" value="Ribosomal protein L9, N-terminal domain"/>
    <property type="match status" value="1"/>
</dbReference>
<dbReference type="HAMAP" id="MF_00503">
    <property type="entry name" value="Ribosomal_bL9"/>
    <property type="match status" value="1"/>
</dbReference>
<dbReference type="InterPro" id="IPR000244">
    <property type="entry name" value="Ribosomal_bL9"/>
</dbReference>
<dbReference type="InterPro" id="IPR009027">
    <property type="entry name" value="Ribosomal_bL9/RNase_H1_N"/>
</dbReference>
<dbReference type="InterPro" id="IPR020594">
    <property type="entry name" value="Ribosomal_bL9_bac/chp"/>
</dbReference>
<dbReference type="InterPro" id="IPR020069">
    <property type="entry name" value="Ribosomal_bL9_C"/>
</dbReference>
<dbReference type="InterPro" id="IPR036791">
    <property type="entry name" value="Ribosomal_bL9_C_sf"/>
</dbReference>
<dbReference type="InterPro" id="IPR020070">
    <property type="entry name" value="Ribosomal_bL9_N"/>
</dbReference>
<dbReference type="InterPro" id="IPR036935">
    <property type="entry name" value="Ribosomal_bL9_N_sf"/>
</dbReference>
<dbReference type="NCBIfam" id="TIGR00158">
    <property type="entry name" value="L9"/>
    <property type="match status" value="1"/>
</dbReference>
<dbReference type="PANTHER" id="PTHR21368">
    <property type="entry name" value="50S RIBOSOMAL PROTEIN L9"/>
    <property type="match status" value="1"/>
</dbReference>
<dbReference type="Pfam" id="PF03948">
    <property type="entry name" value="Ribosomal_L9_C"/>
    <property type="match status" value="1"/>
</dbReference>
<dbReference type="Pfam" id="PF01281">
    <property type="entry name" value="Ribosomal_L9_N"/>
    <property type="match status" value="1"/>
</dbReference>
<dbReference type="SUPFAM" id="SSF55658">
    <property type="entry name" value="L9 N-domain-like"/>
    <property type="match status" value="1"/>
</dbReference>
<dbReference type="SUPFAM" id="SSF55653">
    <property type="entry name" value="Ribosomal protein L9 C-domain"/>
    <property type="match status" value="1"/>
</dbReference>
<dbReference type="PROSITE" id="PS00651">
    <property type="entry name" value="RIBOSOMAL_L9"/>
    <property type="match status" value="1"/>
</dbReference>
<gene>
    <name evidence="1" type="primary">rplI</name>
    <name type="ordered locus">Ctha_0651</name>
</gene>
<accession>B3QVR4</accession>
<name>RL9_CHLT3</name>
<keyword id="KW-1185">Reference proteome</keyword>
<keyword id="KW-0687">Ribonucleoprotein</keyword>
<keyword id="KW-0689">Ribosomal protein</keyword>
<keyword id="KW-0694">RNA-binding</keyword>
<keyword id="KW-0699">rRNA-binding</keyword>
<organism>
    <name type="scientific">Chloroherpeton thalassium (strain ATCC 35110 / GB-78)</name>
    <dbReference type="NCBI Taxonomy" id="517418"/>
    <lineage>
        <taxon>Bacteria</taxon>
        <taxon>Pseudomonadati</taxon>
        <taxon>Chlorobiota</taxon>
        <taxon>Chlorobiia</taxon>
        <taxon>Chlorobiales</taxon>
        <taxon>Chloroherpetonaceae</taxon>
        <taxon>Chloroherpeton</taxon>
    </lineage>
</organism>
<proteinExistence type="inferred from homology"/>